<protein>
    <recommendedName>
        <fullName evidence="1">Ribose-5-phosphate isomerase A</fullName>
        <ecNumber evidence="1">5.3.1.6</ecNumber>
    </recommendedName>
    <alternativeName>
        <fullName evidence="1">Phosphoriboisomerase A</fullName>
        <shortName evidence="1">PRI</shortName>
    </alternativeName>
</protein>
<feature type="chain" id="PRO_1000194734" description="Ribose-5-phosphate isomerase A">
    <location>
        <begin position="1"/>
        <end position="240"/>
    </location>
</feature>
<feature type="region of interest" description="Disordered" evidence="2">
    <location>
        <begin position="1"/>
        <end position="23"/>
    </location>
</feature>
<feature type="active site" description="Proton acceptor" evidence="1">
    <location>
        <position position="120"/>
    </location>
</feature>
<feature type="binding site" evidence="1">
    <location>
        <begin position="32"/>
        <end position="35"/>
    </location>
    <ligand>
        <name>substrate</name>
    </ligand>
</feature>
<feature type="binding site" evidence="1">
    <location>
        <begin position="92"/>
        <end position="95"/>
    </location>
    <ligand>
        <name>substrate</name>
    </ligand>
</feature>
<feature type="binding site" evidence="1">
    <location>
        <begin position="111"/>
        <end position="114"/>
    </location>
    <ligand>
        <name>substrate</name>
    </ligand>
</feature>
<feature type="binding site" evidence="1">
    <location>
        <position position="138"/>
    </location>
    <ligand>
        <name>substrate</name>
    </ligand>
</feature>
<evidence type="ECO:0000255" key="1">
    <source>
        <dbReference type="HAMAP-Rule" id="MF_00170"/>
    </source>
</evidence>
<evidence type="ECO:0000256" key="2">
    <source>
        <dbReference type="SAM" id="MobiDB-lite"/>
    </source>
</evidence>
<keyword id="KW-0413">Isomerase</keyword>
<keyword id="KW-1185">Reference proteome</keyword>
<comment type="function">
    <text evidence="1">Catalyzes the reversible conversion of ribose-5-phosphate to ribulose 5-phosphate.</text>
</comment>
<comment type="catalytic activity">
    <reaction evidence="1">
        <text>aldehydo-D-ribose 5-phosphate = D-ribulose 5-phosphate</text>
        <dbReference type="Rhea" id="RHEA:14657"/>
        <dbReference type="ChEBI" id="CHEBI:58121"/>
        <dbReference type="ChEBI" id="CHEBI:58273"/>
        <dbReference type="EC" id="5.3.1.6"/>
    </reaction>
</comment>
<comment type="pathway">
    <text evidence="1">Carbohydrate degradation; pentose phosphate pathway; D-ribose 5-phosphate from D-ribulose 5-phosphate (non-oxidative stage): step 1/1.</text>
</comment>
<comment type="subunit">
    <text evidence="1">Homodimer.</text>
</comment>
<comment type="similarity">
    <text evidence="1">Belongs to the ribose 5-phosphate isomerase family.</text>
</comment>
<organism>
    <name type="scientific">Halorubrum lacusprofundi (strain ATCC 49239 / DSM 5036 / JCM 8891 / ACAM 34)</name>
    <dbReference type="NCBI Taxonomy" id="416348"/>
    <lineage>
        <taxon>Archaea</taxon>
        <taxon>Methanobacteriati</taxon>
        <taxon>Methanobacteriota</taxon>
        <taxon>Stenosarchaea group</taxon>
        <taxon>Halobacteria</taxon>
        <taxon>Halobacteriales</taxon>
        <taxon>Haloferacaceae</taxon>
        <taxon>Halorubrum</taxon>
    </lineage>
</organism>
<dbReference type="EC" id="5.3.1.6" evidence="1"/>
<dbReference type="EMBL" id="CP001365">
    <property type="protein sequence ID" value="ACM58203.1"/>
    <property type="molecule type" value="Genomic_DNA"/>
</dbReference>
<dbReference type="RefSeq" id="WP_015911314.1">
    <property type="nucleotide sequence ID" value="NC_012029.1"/>
</dbReference>
<dbReference type="SMR" id="B9LU09"/>
<dbReference type="GeneID" id="7400837"/>
<dbReference type="KEGG" id="hla:Hlac_2632"/>
<dbReference type="eggNOG" id="arCOG01122">
    <property type="taxonomic scope" value="Archaea"/>
</dbReference>
<dbReference type="HOGENOM" id="CLU_056590_1_0_2"/>
<dbReference type="UniPathway" id="UPA00115">
    <property type="reaction ID" value="UER00412"/>
</dbReference>
<dbReference type="Proteomes" id="UP000000740">
    <property type="component" value="Chromosome 1"/>
</dbReference>
<dbReference type="GO" id="GO:0005829">
    <property type="term" value="C:cytosol"/>
    <property type="evidence" value="ECO:0007669"/>
    <property type="project" value="TreeGrafter"/>
</dbReference>
<dbReference type="GO" id="GO:0004751">
    <property type="term" value="F:ribose-5-phosphate isomerase activity"/>
    <property type="evidence" value="ECO:0007669"/>
    <property type="project" value="UniProtKB-UniRule"/>
</dbReference>
<dbReference type="GO" id="GO:0006014">
    <property type="term" value="P:D-ribose metabolic process"/>
    <property type="evidence" value="ECO:0007669"/>
    <property type="project" value="TreeGrafter"/>
</dbReference>
<dbReference type="GO" id="GO:0009052">
    <property type="term" value="P:pentose-phosphate shunt, non-oxidative branch"/>
    <property type="evidence" value="ECO:0007669"/>
    <property type="project" value="UniProtKB-UniRule"/>
</dbReference>
<dbReference type="CDD" id="cd01398">
    <property type="entry name" value="RPI_A"/>
    <property type="match status" value="1"/>
</dbReference>
<dbReference type="FunFam" id="3.30.70.260:FF:000018">
    <property type="entry name" value="Ribose-5-phosphate isomerase A"/>
    <property type="match status" value="1"/>
</dbReference>
<dbReference type="Gene3D" id="3.30.70.260">
    <property type="match status" value="1"/>
</dbReference>
<dbReference type="Gene3D" id="3.40.50.1360">
    <property type="match status" value="1"/>
</dbReference>
<dbReference type="HAMAP" id="MF_00170">
    <property type="entry name" value="Rib_5P_isom_A"/>
    <property type="match status" value="1"/>
</dbReference>
<dbReference type="InterPro" id="IPR037171">
    <property type="entry name" value="NagB/RpiA_transferase-like"/>
</dbReference>
<dbReference type="InterPro" id="IPR020672">
    <property type="entry name" value="Ribose5P_isomerase_typA_subgr"/>
</dbReference>
<dbReference type="InterPro" id="IPR004788">
    <property type="entry name" value="Ribose5P_isomerase_type_A"/>
</dbReference>
<dbReference type="NCBIfam" id="NF001924">
    <property type="entry name" value="PRK00702.1"/>
    <property type="match status" value="1"/>
</dbReference>
<dbReference type="NCBIfam" id="TIGR00021">
    <property type="entry name" value="rpiA"/>
    <property type="match status" value="1"/>
</dbReference>
<dbReference type="PANTHER" id="PTHR11934">
    <property type="entry name" value="RIBOSE-5-PHOSPHATE ISOMERASE"/>
    <property type="match status" value="1"/>
</dbReference>
<dbReference type="PANTHER" id="PTHR11934:SF0">
    <property type="entry name" value="RIBOSE-5-PHOSPHATE ISOMERASE"/>
    <property type="match status" value="1"/>
</dbReference>
<dbReference type="Pfam" id="PF06026">
    <property type="entry name" value="Rib_5-P_isom_A"/>
    <property type="match status" value="1"/>
</dbReference>
<dbReference type="SUPFAM" id="SSF75445">
    <property type="entry name" value="D-ribose-5-phosphate isomerase (RpiA), lid domain"/>
    <property type="match status" value="1"/>
</dbReference>
<dbReference type="SUPFAM" id="SSF100950">
    <property type="entry name" value="NagB/RpiA/CoA transferase-like"/>
    <property type="match status" value="1"/>
</dbReference>
<sequence>MKTSGGSDAAKRRAGESAAETVTDGEVVGLGTGSTAAHAIRRLGDRVDSGLDIRGVATSFASRELAAECGIPLLDLDEAVGSDATGIDIAIDGADQVAVGEGESEVGPLIKGGGAAHAREKLVDASADRFLVVADPSKETPVLNRSVPVEVLPAGRSAVAEAVRAAGGEPTLRRAERKDGPVVTDNGNLVLDCAFGEIADPDALSTTLSTTPGVVEHGIFVGLADEVHVGTETGVRVARR</sequence>
<gene>
    <name evidence="1" type="primary">rpiA</name>
    <name type="ordered locus">Hlac_2632</name>
</gene>
<reference key="1">
    <citation type="journal article" date="2016" name="Stand. Genomic Sci.">
        <title>Complete genome sequence of the Antarctic Halorubrum lacusprofundi type strain ACAM 34.</title>
        <authorList>
            <person name="Anderson I.J."/>
            <person name="DasSarma P."/>
            <person name="Lucas S."/>
            <person name="Copeland A."/>
            <person name="Lapidus A."/>
            <person name="Del Rio T.G."/>
            <person name="Tice H."/>
            <person name="Dalin E."/>
            <person name="Bruce D.C."/>
            <person name="Goodwin L."/>
            <person name="Pitluck S."/>
            <person name="Sims D."/>
            <person name="Brettin T.S."/>
            <person name="Detter J.C."/>
            <person name="Han C.S."/>
            <person name="Larimer F."/>
            <person name="Hauser L."/>
            <person name="Land M."/>
            <person name="Ivanova N."/>
            <person name="Richardson P."/>
            <person name="Cavicchioli R."/>
            <person name="DasSarma S."/>
            <person name="Woese C.R."/>
            <person name="Kyrpides N.C."/>
        </authorList>
    </citation>
    <scope>NUCLEOTIDE SEQUENCE [LARGE SCALE GENOMIC DNA]</scope>
    <source>
        <strain>ATCC 49239 / DSM 5036 / JCM 8891 / ACAM 34</strain>
    </source>
</reference>
<name>RPIA_HALLT</name>
<proteinExistence type="inferred from homology"/>
<accession>B9LU09</accession>